<organism>
    <name type="scientific">Clostridium botulinum (strain Alaska E43 / Type E3)</name>
    <dbReference type="NCBI Taxonomy" id="508767"/>
    <lineage>
        <taxon>Bacteria</taxon>
        <taxon>Bacillati</taxon>
        <taxon>Bacillota</taxon>
        <taxon>Clostridia</taxon>
        <taxon>Eubacteriales</taxon>
        <taxon>Clostridiaceae</taxon>
        <taxon>Clostridium</taxon>
    </lineage>
</organism>
<accession>B2UYD5</accession>
<comment type="similarity">
    <text evidence="1">Belongs to the bacterial ribosomal protein bL36 family.</text>
</comment>
<dbReference type="EMBL" id="CP001078">
    <property type="protein sequence ID" value="ACD51126.1"/>
    <property type="molecule type" value="Genomic_DNA"/>
</dbReference>
<dbReference type="RefSeq" id="WP_003373491.1">
    <property type="nucleotide sequence ID" value="NC_010723.1"/>
</dbReference>
<dbReference type="SMR" id="B2UYD5"/>
<dbReference type="GeneID" id="93001034"/>
<dbReference type="KEGG" id="cbt:CLH_0262"/>
<dbReference type="HOGENOM" id="CLU_135723_6_2_9"/>
<dbReference type="GO" id="GO:0005737">
    <property type="term" value="C:cytoplasm"/>
    <property type="evidence" value="ECO:0007669"/>
    <property type="project" value="UniProtKB-ARBA"/>
</dbReference>
<dbReference type="GO" id="GO:1990904">
    <property type="term" value="C:ribonucleoprotein complex"/>
    <property type="evidence" value="ECO:0007669"/>
    <property type="project" value="UniProtKB-KW"/>
</dbReference>
<dbReference type="GO" id="GO:0005840">
    <property type="term" value="C:ribosome"/>
    <property type="evidence" value="ECO:0007669"/>
    <property type="project" value="UniProtKB-KW"/>
</dbReference>
<dbReference type="GO" id="GO:0003735">
    <property type="term" value="F:structural constituent of ribosome"/>
    <property type="evidence" value="ECO:0007669"/>
    <property type="project" value="InterPro"/>
</dbReference>
<dbReference type="GO" id="GO:0006412">
    <property type="term" value="P:translation"/>
    <property type="evidence" value="ECO:0007669"/>
    <property type="project" value="UniProtKB-UniRule"/>
</dbReference>
<dbReference type="HAMAP" id="MF_00251">
    <property type="entry name" value="Ribosomal_bL36"/>
    <property type="match status" value="1"/>
</dbReference>
<dbReference type="InterPro" id="IPR000473">
    <property type="entry name" value="Ribosomal_bL36"/>
</dbReference>
<dbReference type="InterPro" id="IPR035977">
    <property type="entry name" value="Ribosomal_bL36_sp"/>
</dbReference>
<dbReference type="NCBIfam" id="TIGR01022">
    <property type="entry name" value="rpmJ_bact"/>
    <property type="match status" value="1"/>
</dbReference>
<dbReference type="PANTHER" id="PTHR42888">
    <property type="entry name" value="50S RIBOSOMAL PROTEIN L36, CHLOROPLASTIC"/>
    <property type="match status" value="1"/>
</dbReference>
<dbReference type="PANTHER" id="PTHR42888:SF1">
    <property type="entry name" value="LARGE RIBOSOMAL SUBUNIT PROTEIN BL36C"/>
    <property type="match status" value="1"/>
</dbReference>
<dbReference type="Pfam" id="PF00444">
    <property type="entry name" value="Ribosomal_L36"/>
    <property type="match status" value="1"/>
</dbReference>
<dbReference type="SUPFAM" id="SSF57840">
    <property type="entry name" value="Ribosomal protein L36"/>
    <property type="match status" value="1"/>
</dbReference>
<dbReference type="PROSITE" id="PS00828">
    <property type="entry name" value="RIBOSOMAL_L36"/>
    <property type="match status" value="1"/>
</dbReference>
<protein>
    <recommendedName>
        <fullName evidence="1">Large ribosomal subunit protein bL36</fullName>
    </recommendedName>
    <alternativeName>
        <fullName evidence="2">50S ribosomal protein L36</fullName>
    </alternativeName>
</protein>
<proteinExistence type="inferred from homology"/>
<name>RL36_CLOBA</name>
<feature type="chain" id="PRO_1000101018" description="Large ribosomal subunit protein bL36">
    <location>
        <begin position="1"/>
        <end position="37"/>
    </location>
</feature>
<keyword id="KW-0687">Ribonucleoprotein</keyword>
<keyword id="KW-0689">Ribosomal protein</keyword>
<sequence>MKVRPSVKPICEKCKVIKRKGRVMVICENPKHKQKQG</sequence>
<reference key="1">
    <citation type="submission" date="2008-05" db="EMBL/GenBank/DDBJ databases">
        <title>Complete genome sequence of Clostridium botulinum E3 str. Alaska E43.</title>
        <authorList>
            <person name="Brinkac L.M."/>
            <person name="Brown J.L."/>
            <person name="Bruce D."/>
            <person name="Detter C."/>
            <person name="Munk C."/>
            <person name="Smith L.A."/>
            <person name="Smith T.J."/>
            <person name="Sutton G."/>
            <person name="Brettin T.S."/>
        </authorList>
    </citation>
    <scope>NUCLEOTIDE SEQUENCE [LARGE SCALE GENOMIC DNA]</scope>
    <source>
        <strain>Alaska E43 / Type E3</strain>
    </source>
</reference>
<gene>
    <name evidence="1" type="primary">rpmJ</name>
    <name type="ordered locus">CLH_0262</name>
</gene>
<evidence type="ECO:0000255" key="1">
    <source>
        <dbReference type="HAMAP-Rule" id="MF_00251"/>
    </source>
</evidence>
<evidence type="ECO:0000305" key="2"/>